<gene>
    <name evidence="1" type="primary">yidD</name>
    <name type="ordered locus">EFER_4001</name>
</gene>
<comment type="function">
    <text evidence="1">Could be involved in insertion of integral membrane proteins into the membrane.</text>
</comment>
<comment type="subcellular location">
    <subcellularLocation>
        <location evidence="1">Cell inner membrane</location>
        <topology evidence="1">Peripheral membrane protein</topology>
        <orientation evidence="1">Cytoplasmic side</orientation>
    </subcellularLocation>
</comment>
<comment type="similarity">
    <text evidence="1">Belongs to the UPF0161 family.</text>
</comment>
<protein>
    <recommendedName>
        <fullName evidence="1">Putative membrane protein insertion efficiency factor</fullName>
    </recommendedName>
</protein>
<name>YIDD_ESCF3</name>
<proteinExistence type="inferred from homology"/>
<reference key="1">
    <citation type="journal article" date="2009" name="PLoS Genet.">
        <title>Organised genome dynamics in the Escherichia coli species results in highly diverse adaptive paths.</title>
        <authorList>
            <person name="Touchon M."/>
            <person name="Hoede C."/>
            <person name="Tenaillon O."/>
            <person name="Barbe V."/>
            <person name="Baeriswyl S."/>
            <person name="Bidet P."/>
            <person name="Bingen E."/>
            <person name="Bonacorsi S."/>
            <person name="Bouchier C."/>
            <person name="Bouvet O."/>
            <person name="Calteau A."/>
            <person name="Chiapello H."/>
            <person name="Clermont O."/>
            <person name="Cruveiller S."/>
            <person name="Danchin A."/>
            <person name="Diard M."/>
            <person name="Dossat C."/>
            <person name="Karoui M.E."/>
            <person name="Frapy E."/>
            <person name="Garry L."/>
            <person name="Ghigo J.M."/>
            <person name="Gilles A.M."/>
            <person name="Johnson J."/>
            <person name="Le Bouguenec C."/>
            <person name="Lescat M."/>
            <person name="Mangenot S."/>
            <person name="Martinez-Jehanne V."/>
            <person name="Matic I."/>
            <person name="Nassif X."/>
            <person name="Oztas S."/>
            <person name="Petit M.A."/>
            <person name="Pichon C."/>
            <person name="Rouy Z."/>
            <person name="Ruf C.S."/>
            <person name="Schneider D."/>
            <person name="Tourret J."/>
            <person name="Vacherie B."/>
            <person name="Vallenet D."/>
            <person name="Medigue C."/>
            <person name="Rocha E.P.C."/>
            <person name="Denamur E."/>
        </authorList>
    </citation>
    <scope>NUCLEOTIDE SEQUENCE [LARGE SCALE GENOMIC DNA]</scope>
    <source>
        <strain>ATCC 35469 / DSM 13698 / BCRC 15582 / CCUG 18766 / IAM 14443 / JCM 21226 / LMG 7866 / NBRC 102419 / NCTC 12128 / CDC 0568-73</strain>
    </source>
</reference>
<dbReference type="EMBL" id="CU928158">
    <property type="protein sequence ID" value="CAQ91435.1"/>
    <property type="molecule type" value="Genomic_DNA"/>
</dbReference>
<dbReference type="RefSeq" id="WP_001307474.1">
    <property type="nucleotide sequence ID" value="NC_011740.1"/>
</dbReference>
<dbReference type="GeneID" id="97443257"/>
<dbReference type="KEGG" id="efe:EFER_4001"/>
<dbReference type="HOGENOM" id="CLU_144811_5_2_6"/>
<dbReference type="OrthoDB" id="9801753at2"/>
<dbReference type="Proteomes" id="UP000000745">
    <property type="component" value="Chromosome"/>
</dbReference>
<dbReference type="GO" id="GO:0005886">
    <property type="term" value="C:plasma membrane"/>
    <property type="evidence" value="ECO:0007669"/>
    <property type="project" value="UniProtKB-SubCell"/>
</dbReference>
<dbReference type="HAMAP" id="MF_00386">
    <property type="entry name" value="UPF0161_YidD"/>
    <property type="match status" value="1"/>
</dbReference>
<dbReference type="InterPro" id="IPR002696">
    <property type="entry name" value="Membr_insert_effic_factor_YidD"/>
</dbReference>
<dbReference type="NCBIfam" id="TIGR00278">
    <property type="entry name" value="membrane protein insertion efficiency factor YidD"/>
    <property type="match status" value="1"/>
</dbReference>
<dbReference type="PANTHER" id="PTHR33383">
    <property type="entry name" value="MEMBRANE PROTEIN INSERTION EFFICIENCY FACTOR-RELATED"/>
    <property type="match status" value="1"/>
</dbReference>
<dbReference type="PANTHER" id="PTHR33383:SF1">
    <property type="entry name" value="MEMBRANE PROTEIN INSERTION EFFICIENCY FACTOR-RELATED"/>
    <property type="match status" value="1"/>
</dbReference>
<dbReference type="Pfam" id="PF01809">
    <property type="entry name" value="YidD"/>
    <property type="match status" value="1"/>
</dbReference>
<dbReference type="SMART" id="SM01234">
    <property type="entry name" value="Haemolytic"/>
    <property type="match status" value="1"/>
</dbReference>
<organism>
    <name type="scientific">Escherichia fergusonii (strain ATCC 35469 / DSM 13698 / CCUG 18766 / IAM 14443 / JCM 21226 / LMG 7866 / NBRC 102419 / NCTC 12128 / CDC 0568-73)</name>
    <dbReference type="NCBI Taxonomy" id="585054"/>
    <lineage>
        <taxon>Bacteria</taxon>
        <taxon>Pseudomonadati</taxon>
        <taxon>Pseudomonadota</taxon>
        <taxon>Gammaproteobacteria</taxon>
        <taxon>Enterobacterales</taxon>
        <taxon>Enterobacteriaceae</taxon>
        <taxon>Escherichia</taxon>
    </lineage>
</organism>
<feature type="chain" id="PRO_1000122642" description="Putative membrane protein insertion efficiency factor">
    <location>
        <begin position="1"/>
        <end position="85"/>
    </location>
</feature>
<keyword id="KW-0997">Cell inner membrane</keyword>
<keyword id="KW-1003">Cell membrane</keyword>
<keyword id="KW-0472">Membrane</keyword>
<evidence type="ECO:0000255" key="1">
    <source>
        <dbReference type="HAMAP-Rule" id="MF_00386"/>
    </source>
</evidence>
<accession>B7LK47</accession>
<sequence length="85" mass="9381">MAPPLSPGSRVLIALIRVYQRLISPLLGPHCRFTPTCSSYGIEALRRFGVIKGSWLTVKRVLKCHPLHPGGDDPVPPGPFDTREH</sequence>